<accession>H0QPM1</accession>
<protein>
    <recommendedName>
        <fullName evidence="2">C-glycoside deglycosidase beta subunit</fullName>
        <shortName evidence="2">CGD beta subunit</shortName>
        <ecNumber evidence="1">4.1.99.-</ecNumber>
    </recommendedName>
    <alternativeName>
        <fullName evidence="2">AgCGD1 beta</fullName>
    </alternativeName>
    <alternativeName>
        <fullName evidence="2">C-deglycosylation enzyme beta subunit</fullName>
    </alternativeName>
</protein>
<sequence>MIADRIIEHGTLITRDGRAAVEVRIPWYRALPGSCIAGAALTVDGVAAPEDTLRWTMNNRTFSFEELVDETGEWWFPLDSAVLSGDLPVWDDQAEHEVRVDLKLCIPYIITDHGVLHIEEHDTKTMKVAQQ</sequence>
<reference key="1">
    <citation type="submission" date="2011-12" db="EMBL/GenBank/DDBJ databases">
        <title>Whole genome shotgun sequence of Arthrobacter globiformis NBRC 12137.</title>
        <authorList>
            <person name="Miyazawa S."/>
            <person name="Hosoyama A."/>
            <person name="Tsuchikane K."/>
            <person name="Katsumata H."/>
            <person name="Yamazaki S."/>
            <person name="Fujita N."/>
        </authorList>
    </citation>
    <scope>NUCLEOTIDE SEQUENCE [LARGE SCALE GENOMIC DNA]</scope>
    <source>
        <strain>ATCC 8010 / DSM 20124 / JCM 1332 / NBRC 12137 / NCIMB 8907 / NRRL B-2979 / 168</strain>
    </source>
</reference>
<reference key="2">
    <citation type="journal article" date="2021" name="Nat. Commun.">
        <title>C-Glycoside metabolism in the gut and in nature: Identification, characterization, structural analyses and distribution of C-C bond-cleaving enzymes.</title>
        <authorList>
            <person name="Mori T."/>
            <person name="Kumano T."/>
            <person name="He H."/>
            <person name="Watanabe S."/>
            <person name="Senda M."/>
            <person name="Moriya T."/>
            <person name="Adachi N."/>
            <person name="Hori S."/>
            <person name="Terashita Y."/>
            <person name="Kawasaki M."/>
            <person name="Hashimoto Y."/>
            <person name="Awakawa T."/>
            <person name="Senda T."/>
            <person name="Abe I."/>
            <person name="Kobayashi M."/>
        </authorList>
    </citation>
    <scope>FUNCTION</scope>
    <scope>CATALYTIC ACTIVITY</scope>
    <scope>COFACTOR</scope>
    <scope>ACTIVITY REGULATION</scope>
    <scope>BIOPHYSICOCHEMICAL PROPERTIES</scope>
    <scope>SUBUNIT</scope>
    <source>
        <strain>ATCC 8010 / DSM 20124 / JCM 1332 / NBRC 12137 / NCIMB 8907 / NRRL B-2979 / 168</strain>
    </source>
</reference>
<gene>
    <name evidence="2" type="primary">carC1</name>
    <name evidence="4" type="ORF">ARGLB_075_00550</name>
</gene>
<evidence type="ECO:0000269" key="1">
    <source>
    </source>
</evidence>
<evidence type="ECO:0000303" key="2">
    <source>
    </source>
</evidence>
<evidence type="ECO:0000305" key="3"/>
<evidence type="ECO:0000312" key="4">
    <source>
        <dbReference type="EMBL" id="GAB14772.1"/>
    </source>
</evidence>
<proteinExistence type="evidence at protein level"/>
<organism>
    <name type="scientific">Arthrobacter globiformis (strain ATCC 8010 / DSM 20124 / JCM 1332 / NBRC 12137 / NCIMB 8907 / NRRL B-2979 / 168)</name>
    <dbReference type="NCBI Taxonomy" id="1077972"/>
    <lineage>
        <taxon>Bacteria</taxon>
        <taxon>Bacillati</taxon>
        <taxon>Actinomycetota</taxon>
        <taxon>Actinomycetes</taxon>
        <taxon>Micrococcales</taxon>
        <taxon>Micrococcaceae</taxon>
        <taxon>Arthrobacter</taxon>
    </lineage>
</organism>
<dbReference type="EC" id="4.1.99.-" evidence="1"/>
<dbReference type="EMBL" id="BAEG01000075">
    <property type="protein sequence ID" value="GAB14772.1"/>
    <property type="molecule type" value="Genomic_DNA"/>
</dbReference>
<dbReference type="RefSeq" id="WP_003803560.1">
    <property type="nucleotide sequence ID" value="NZ_BAEG01000075.1"/>
</dbReference>
<dbReference type="SMR" id="H0QPM1"/>
<dbReference type="STRING" id="1077972.ARGLB_075_00550"/>
<dbReference type="OrthoDB" id="1494151at2"/>
<dbReference type="Proteomes" id="UP000003828">
    <property type="component" value="Unassembled WGS sequence"/>
</dbReference>
<dbReference type="GO" id="GO:0016829">
    <property type="term" value="F:lyase activity"/>
    <property type="evidence" value="ECO:0007669"/>
    <property type="project" value="UniProtKB-KW"/>
</dbReference>
<dbReference type="InterPro" id="IPR045959">
    <property type="entry name" value="CGDB"/>
</dbReference>
<dbReference type="Pfam" id="PF19906">
    <property type="entry name" value="CGDB"/>
    <property type="match status" value="1"/>
</dbReference>
<name>CGDB1_ARTG1</name>
<comment type="function">
    <text evidence="1">Carbon-carbon bond-cleaving enzyme which participates in the metabolism of C-glycosides (PubMed:34728636). Acts on the C6-glycosylated compound 3''-dehydroisovitexin (3''-oxo-isovitexin) (PubMed:34728636). Shows weak activity with 3''-dehydroisoorientin (3''-oxo-homoorientin) and 3'-dehydromangiferin (3'-oxo-mangiferin) (PubMed:34728636).</text>
</comment>
<comment type="catalytic activity">
    <reaction evidence="1">
        <text>3''-dehydroisovitexin = 1,5-anhydro-D-erythro-hex-1-en-3-ulose + apigenin</text>
        <dbReference type="Rhea" id="RHEA:78775"/>
        <dbReference type="ChEBI" id="CHEBI:58470"/>
        <dbReference type="ChEBI" id="CHEBI:194219"/>
        <dbReference type="ChEBI" id="CHEBI:195275"/>
    </reaction>
</comment>
<comment type="cofactor">
    <cofactor evidence="1">
        <name>Mg(2+)</name>
        <dbReference type="ChEBI" id="CHEBI:18420"/>
    </cofactor>
</comment>
<comment type="activity regulation">
    <text evidence="1">Activity is strongly reduced in the presence of chelating agents.</text>
</comment>
<comment type="biophysicochemical properties">
    <kinetics>
        <KM evidence="1">3.5 mM for 3''-dehydroisovitexin</KM>
        <KM evidence="1">3.4 mM for 3''-dehydroisoorientin</KM>
        <KM evidence="1">3.7 mM for 3'-dehydromangiferin</KM>
        <text evidence="1">kcat is 4.6 min(-1) with 3''-dehydroisovitexin as substrate. kcat is 0.57 min(-1) with 3''-dehydroisoorientin as substrate. kcat is 0.17 min(-1) with 3'-dehydromangiferin as substrate.</text>
    </kinetics>
    <phDependence>
        <text evidence="1">Optimum pH is 7.5.</text>
    </phDependence>
    <temperatureDependence>
        <text evidence="1">Optimum temperature is around 40 degrees Celsius.</text>
    </temperatureDependence>
</comment>
<comment type="subunit">
    <text evidence="1">Heterodimer composed of an alpha subunit (CarB1) and a beta subunit (CarC1).</text>
</comment>
<comment type="similarity">
    <text evidence="3">Belongs to the C-glycoside deglycosidase beta subunit family.</text>
</comment>
<keyword id="KW-0119">Carbohydrate metabolism</keyword>
<keyword id="KW-0456">Lyase</keyword>
<keyword id="KW-0460">Magnesium</keyword>
<keyword id="KW-1185">Reference proteome</keyword>
<feature type="chain" id="PRO_0000461028" description="C-glycoside deglycosidase beta subunit">
    <location>
        <begin position="1"/>
        <end position="131"/>
    </location>
</feature>